<accession>C3M9Z9</accession>
<dbReference type="EMBL" id="CP001389">
    <property type="protein sequence ID" value="ACP26924.1"/>
    <property type="molecule type" value="Genomic_DNA"/>
</dbReference>
<dbReference type="RefSeq" id="WP_012709672.1">
    <property type="nucleotide sequence ID" value="NC_012587.1"/>
</dbReference>
<dbReference type="RefSeq" id="YP_002827677.1">
    <property type="nucleotide sequence ID" value="NC_012587.1"/>
</dbReference>
<dbReference type="SMR" id="C3M9Z9"/>
<dbReference type="STRING" id="394.NGR_c31900"/>
<dbReference type="KEGG" id="rhi:NGR_c31900"/>
<dbReference type="PATRIC" id="fig|394.7.peg.6028"/>
<dbReference type="eggNOG" id="COG2835">
    <property type="taxonomic scope" value="Bacteria"/>
</dbReference>
<dbReference type="HOGENOM" id="CLU_155659_2_2_5"/>
<dbReference type="OrthoDB" id="9812205at2"/>
<dbReference type="Proteomes" id="UP000001054">
    <property type="component" value="Chromosome"/>
</dbReference>
<dbReference type="GO" id="GO:0005829">
    <property type="term" value="C:cytosol"/>
    <property type="evidence" value="ECO:0007669"/>
    <property type="project" value="TreeGrafter"/>
</dbReference>
<dbReference type="FunFam" id="2.20.25.10:FF:000002">
    <property type="entry name" value="UPF0434 protein YcaR"/>
    <property type="match status" value="1"/>
</dbReference>
<dbReference type="Gene3D" id="2.20.25.10">
    <property type="match status" value="1"/>
</dbReference>
<dbReference type="HAMAP" id="MF_01187">
    <property type="entry name" value="UPF0434"/>
    <property type="match status" value="1"/>
</dbReference>
<dbReference type="InterPro" id="IPR005651">
    <property type="entry name" value="Trm112-like"/>
</dbReference>
<dbReference type="PANTHER" id="PTHR33505:SF4">
    <property type="entry name" value="PROTEIN PREY, MITOCHONDRIAL"/>
    <property type="match status" value="1"/>
</dbReference>
<dbReference type="PANTHER" id="PTHR33505">
    <property type="entry name" value="ZGC:162634"/>
    <property type="match status" value="1"/>
</dbReference>
<dbReference type="Pfam" id="PF03966">
    <property type="entry name" value="Trm112p"/>
    <property type="match status" value="1"/>
</dbReference>
<dbReference type="SUPFAM" id="SSF158997">
    <property type="entry name" value="Trm112p-like"/>
    <property type="match status" value="1"/>
</dbReference>
<organism>
    <name type="scientific">Sinorhizobium fredii (strain NBRC 101917 / NGR234)</name>
    <dbReference type="NCBI Taxonomy" id="394"/>
    <lineage>
        <taxon>Bacteria</taxon>
        <taxon>Pseudomonadati</taxon>
        <taxon>Pseudomonadota</taxon>
        <taxon>Alphaproteobacteria</taxon>
        <taxon>Hyphomicrobiales</taxon>
        <taxon>Rhizobiaceae</taxon>
        <taxon>Sinorhizobium/Ensifer group</taxon>
        <taxon>Sinorhizobium</taxon>
    </lineage>
</organism>
<protein>
    <recommendedName>
        <fullName evidence="1">UPF0434 protein NGR_c31900</fullName>
    </recommendedName>
</protein>
<reference key="1">
    <citation type="journal article" date="2009" name="Appl. Environ. Microbiol.">
        <title>Rhizobium sp. strain NGR234 possesses a remarkable number of secretion systems.</title>
        <authorList>
            <person name="Schmeisser C."/>
            <person name="Liesegang H."/>
            <person name="Krysciak D."/>
            <person name="Bakkou N."/>
            <person name="Le Quere A."/>
            <person name="Wollherr A."/>
            <person name="Heinemeyer I."/>
            <person name="Morgenstern B."/>
            <person name="Pommerening-Roeser A."/>
            <person name="Flores M."/>
            <person name="Palacios R."/>
            <person name="Brenner S."/>
            <person name="Gottschalk G."/>
            <person name="Schmitz R.A."/>
            <person name="Broughton W.J."/>
            <person name="Perret X."/>
            <person name="Strittmatter A.W."/>
            <person name="Streit W.R."/>
        </authorList>
    </citation>
    <scope>NUCLEOTIDE SEQUENCE [LARGE SCALE GENOMIC DNA]</scope>
    <source>
        <strain>NBRC 101917 / NGR234</strain>
    </source>
</reference>
<proteinExistence type="inferred from homology"/>
<sequence length="62" mass="6977">MDANASRVDPKLLELLVCPLTKGRLRYDAEAHELVSEKARLAYPIRDGVPIMLVSEARKIED</sequence>
<evidence type="ECO:0000255" key="1">
    <source>
        <dbReference type="HAMAP-Rule" id="MF_01187"/>
    </source>
</evidence>
<feature type="chain" id="PRO_1000164487" description="UPF0434 protein NGR_c31900">
    <location>
        <begin position="1"/>
        <end position="62"/>
    </location>
</feature>
<name>Y3190_SINFN</name>
<keyword id="KW-1185">Reference proteome</keyword>
<gene>
    <name type="ordered locus">NGR_c31900</name>
</gene>
<comment type="similarity">
    <text evidence="1">Belongs to the UPF0434 family.</text>
</comment>